<organism evidence="9">
    <name type="scientific">Plasmodium berghei (strain Anka)</name>
    <dbReference type="NCBI Taxonomy" id="5823"/>
    <lineage>
        <taxon>Eukaryota</taxon>
        <taxon>Sar</taxon>
        <taxon>Alveolata</taxon>
        <taxon>Apicomplexa</taxon>
        <taxon>Aconoidasida</taxon>
        <taxon>Haemosporida</taxon>
        <taxon>Plasmodiidae</taxon>
        <taxon>Plasmodium</taxon>
        <taxon>Plasmodium (Vinckeia)</taxon>
    </lineage>
</organism>
<name>RCH2_PLABA</name>
<accession>A0A509AKZ5</accession>
<evidence type="ECO:0000250" key="1">
    <source>
        <dbReference type="UniProtKB" id="A0A2I0BSI4"/>
    </source>
</evidence>
<evidence type="ECO:0000250" key="2">
    <source>
        <dbReference type="UniProtKB" id="C0H571"/>
    </source>
</evidence>
<evidence type="ECO:0000250" key="3">
    <source>
        <dbReference type="UniProtKB" id="Q8I060"/>
    </source>
</evidence>
<evidence type="ECO:0000255" key="4"/>
<evidence type="ECO:0000269" key="5">
    <source>
    </source>
</evidence>
<evidence type="ECO:0000303" key="6">
    <source>
    </source>
</evidence>
<evidence type="ECO:0000305" key="7"/>
<evidence type="ECO:0000312" key="8">
    <source>
        <dbReference type="EMBL" id="VUC55462.1"/>
    </source>
</evidence>
<evidence type="ECO:0000312" key="9">
    <source>
        <dbReference type="Proteomes" id="UP000074855"/>
    </source>
</evidence>
<feature type="signal peptide" evidence="4">
    <location>
        <begin position="1"/>
        <end position="20"/>
    </location>
</feature>
<feature type="chain" id="PRO_0000460254" description="High molecular weight rhoptry protein 2" evidence="4">
    <location>
        <begin position="21"/>
        <end position="1354"/>
    </location>
</feature>
<feature type="transmembrane region" description="Helical" evidence="4">
    <location>
        <begin position="716"/>
        <end position="736"/>
    </location>
</feature>
<feature type="disulfide bond" evidence="1">
    <location>
        <begin position="50"/>
        <end position="75"/>
    </location>
</feature>
<feature type="disulfide bond" evidence="1">
    <location>
        <begin position="220"/>
        <end position="227"/>
    </location>
</feature>
<feature type="disulfide bond" evidence="1">
    <location>
        <begin position="768"/>
        <end position="828"/>
    </location>
</feature>
<feature type="disulfide bond" evidence="1">
    <location>
        <begin position="848"/>
        <end position="889"/>
    </location>
</feature>
<feature type="disulfide bond" evidence="1">
    <location>
        <begin position="924"/>
        <end position="1011"/>
    </location>
</feature>
<dbReference type="EMBL" id="LK023123">
    <property type="protein sequence ID" value="VUC55462.1"/>
    <property type="molecule type" value="Genomic_DNA"/>
</dbReference>
<dbReference type="SMR" id="A0A509AKZ5"/>
<dbReference type="FunCoup" id="A0A509AKZ5">
    <property type="interactions" value="610"/>
</dbReference>
<dbReference type="STRING" id="5823.A0A509AKZ5"/>
<dbReference type="VEuPathDB" id="PlasmoDB:PBANKA_0830200"/>
<dbReference type="InParanoid" id="A0A509AKZ5"/>
<dbReference type="OMA" id="DVYDFFY"/>
<dbReference type="Proteomes" id="UP000074855">
    <property type="component" value="Chromosome 8"/>
</dbReference>
<dbReference type="GO" id="GO:0031410">
    <property type="term" value="C:cytoplasmic vesicle"/>
    <property type="evidence" value="ECO:0007669"/>
    <property type="project" value="UniProtKB-KW"/>
</dbReference>
<dbReference type="GO" id="GO:0020002">
    <property type="term" value="C:host cell plasma membrane"/>
    <property type="evidence" value="ECO:0007669"/>
    <property type="project" value="UniProtKB-SubCell"/>
</dbReference>
<dbReference type="GO" id="GO:0016020">
    <property type="term" value="C:membrane"/>
    <property type="evidence" value="ECO:0007669"/>
    <property type="project" value="UniProtKB-KW"/>
</dbReference>
<dbReference type="GO" id="GO:0020008">
    <property type="term" value="C:rhoptry"/>
    <property type="evidence" value="ECO:0007669"/>
    <property type="project" value="UniProtKB-SubCell"/>
</dbReference>
<dbReference type="GO" id="GO:0020005">
    <property type="term" value="C:symbiont-containing vacuole membrane"/>
    <property type="evidence" value="ECO:0007669"/>
    <property type="project" value="UniProtKB-SubCell"/>
</dbReference>
<protein>
    <recommendedName>
        <fullName evidence="8">High molecular weight rhoptry protein 2</fullName>
    </recommendedName>
</protein>
<comment type="function">
    <text evidence="2 5">Participates in the formation of new permeability pathways in Plasmodium-infected erythrocytes enabling the uptake of nutrients from the blood plasma (By similarity). Required for maintaining invasion capacity of merozoites (PubMed:28252383). Required for parasite growth and proliferation (PubMed:28252383).</text>
</comment>
<comment type="subunit">
    <text evidence="2 3">Component of the RhopH complex (By similarity). RhopH complex is composed of CLAG3.1/CLAG3.2, RhopH2 and RhopH3 with a 1:1:1 subunit stoichiometry (By similarity). Interacts with CLAG3.1/CLAG3.2 (By similarity).</text>
</comment>
<comment type="subcellular location">
    <subcellularLocation>
        <location evidence="2">Host cell membrane</location>
        <topology evidence="4">Single-pass membrane protein</topology>
    </subcellularLocation>
    <subcellularLocation>
        <location evidence="2">Host cell membrane</location>
        <topology evidence="2">Peripheral membrane protein</topology>
    </subcellularLocation>
    <subcellularLocation>
        <location evidence="2">Parasitophorous vacuole membrane</location>
        <topology evidence="7">Peripheral membrane protein</topology>
    </subcellularLocation>
    <subcellularLocation>
        <location evidence="2">Host cytoplasm</location>
    </subcellularLocation>
    <subcellularLocation>
        <location evidence="2">Cytoplasm</location>
    </subcellularLocation>
    <subcellularLocation>
        <location evidence="2">Cytoplasmic vesicle</location>
        <location evidence="2">Secretory vesicle</location>
        <location evidence="2">Rhoptry</location>
    </subcellularLocation>
    <text evidence="3">Export to host cytosol is mediated by the Plasmodium translocon of exported proteins (PTEX) complex.</text>
</comment>
<comment type="disruption phenotype">
    <text evidence="5">Conditional knockdown reduces parasite growth in mice and in culture (PubMed:28252383). Delayed progression to trophozoite stage (PubMed:28252383). Aberrant morphology at schizont stages (PubMed:28252383). Fewer merozoites (PubMed:28252383).</text>
</comment>
<sequence length="1354" mass="160024">MVKLSGIILLSLVWLKLNNSYEIRERISNKNNPDDDILKINVEEDKKKICNNILIFLNADDILTENNKYSFMGKCEKLIDDIKNENNSPDITNEFALSLMHMRSKHTITSSINNNKALKNIIISLDKSMSEPEVINRVKHIIRFNKYLAGKLSYKNIGESLVLRVSSHERMRRSKRELVRNILKDFHIYGLYFDLKSENSTLLKNQESESLINIKNEKLCQTYIHLCQKFYEQTSVYYKIKTILNEVIKHTKDNYALEGEYDISKLFSLENSISQVSQHSDHMLTNESLIYDMNKSNYIKYNQLIHEVIPEDGNIEEQVKKGNGRYIVVVKNLKKAIGNSENYDNIMNIIKKYLINVTKNNKEILDMVMELGNEDIEQFMTQLVFFIHYGFLLITEDKHMIYLSDMIPTYTNLYRANEVLLLHIMDIKFESDDFNKYEKYKFETSDNDKETYSLLNEIDSITQLPKLSENVANDYFSKIMDKDAYTMLTLDKGINKYQFYFTMAFKDCNINQNYTPLAKDLWTELIYTFDNFGWFYFNPNKIMSSISKSNFIRHVLVSRNFILKNMESLIYLDTQISRLMDMIGLSFLADKSEYILDLSLSNYLFLYVNEYHIFKKDENVKLIHTYDYIDSIANNYYYFSEKKYPVFKTDYSSKLYTNFPNVYSLAYQLFNELAINMNISNTPLKKKLKNKSNYAYFTILNLIGPNHDIYSRGPRLIFAAYMLTLVFFIESQIDISRYRPNDMYFMKKAMPLLAPINRDDFNILKKRCSLLTDFIKINRNKAKNEHSRVEEYIKILNLVTILLWGKESNKSLYYDNDVSLYKKLLIACVFNGGITVQEKVIKSIKRSCNMEQYGLNKSNIEDFVNVNLSVYQWNPDILEKIATAFTLTCKVHNMIYEPFDVHKVDAKDYYKLAVAPDMVKTYHCFLLGRQAERLLESLILKKNFVKFKVEDAIDVYEFFYVTRILSKNPREDFELFLKNKKEYQKKQKDEIIKNSKLDENVTDILFQNYECYWFKSYENFKSLWMHAASNLGPGAYLRNFFSEIWNNMGTLFKKQSKVRDVEYFNINLIGGTLIDYYSPLLKSEEHCRNVTQKLFISMKDSGTKSRIEIPDEIKSKYFQCKLDYYKNNHSDPVHKIYSRDFLENKVYVFKQPYYLLSNIDDKNKKQLLRLFITETTLQYLLLDDIQIPECLGRCTIEHFNKVLLTTANAKPHETIIYNGLIPENCKSKIRKEMKIFIHSSFVHNLTRDYLTGELIRTQDIQNGDVHVCMGSDTYYTENILTDQHFDLTHKPQFNFPENNNYRVFLKKNINKIAKNPESQCYVHYELSVLDTDIPDPYREIGKDLITNIELLESK</sequence>
<keyword id="KW-0963">Cytoplasm</keyword>
<keyword id="KW-0968">Cytoplasmic vesicle</keyword>
<keyword id="KW-1015">Disulfide bond</keyword>
<keyword id="KW-1032">Host cell membrane</keyword>
<keyword id="KW-1035">Host cytoplasm</keyword>
<keyword id="KW-1043">Host membrane</keyword>
<keyword id="KW-0472">Membrane</keyword>
<keyword id="KW-1185">Reference proteome</keyword>
<keyword id="KW-0732">Signal</keyword>
<keyword id="KW-0812">Transmembrane</keyword>
<keyword id="KW-1133">Transmembrane helix</keyword>
<keyword id="KW-0813">Transport</keyword>
<gene>
    <name evidence="6" type="primary">RhopH2</name>
    <name evidence="8" type="ORF">PBANKA_0830200</name>
</gene>
<reference evidence="9" key="1">
    <citation type="journal article" date="2014" name="BMC Biol.">
        <title>A comprehensive evaluation of rodent malaria parasite genomes and gene expression.</title>
        <authorList>
            <person name="Otto T.D."/>
            <person name="Bohme U."/>
            <person name="Jackson A.P."/>
            <person name="Hunt M."/>
            <person name="Franke-Fayard B."/>
            <person name="Hoeijmakers W.A."/>
            <person name="Religa A.A."/>
            <person name="Robertson L."/>
            <person name="Sanders M."/>
            <person name="Ogun S.A."/>
            <person name="Cunningham D."/>
            <person name="Erhart A."/>
            <person name="Billker O."/>
            <person name="Khan S.M."/>
            <person name="Stunnenberg H.G."/>
            <person name="Langhorne J."/>
            <person name="Holder A.A."/>
            <person name="Waters A.P."/>
            <person name="Newbold C.I."/>
            <person name="Pain A."/>
            <person name="Berriman M."/>
            <person name="Janse C.J."/>
        </authorList>
    </citation>
    <scope>NUCLEOTIDE SEQUENCE [LARGE SCALE GENOMIC DNA]</scope>
    <source>
        <strain evidence="9">ANKA</strain>
    </source>
</reference>
<reference evidence="7" key="2">
    <citation type="journal article" date="2017" name="Elife">
        <title>Plasmodium falciparum parasites deploy RhopH2 into the host erythrocyte to obtain nutrients, grow and replicate.</title>
        <authorList>
            <person name="Counihan N.A."/>
            <person name="Chisholm S.A."/>
            <person name="Bullen H.E."/>
            <person name="Srivastava A."/>
            <person name="Sanders P.R."/>
            <person name="Jonsdottir T.K."/>
            <person name="Weiss G.E."/>
            <person name="Ghosh S."/>
            <person name="Crabb B.S."/>
            <person name="Creek D.J."/>
            <person name="Gilson P.R."/>
            <person name="de Koning-Ward T.F."/>
        </authorList>
    </citation>
    <scope>FUNCTION</scope>
    <scope>DISRUPTION PHENOTYPE</scope>
</reference>
<proteinExistence type="inferred from homology"/>